<accession>A5D2W7</accession>
<evidence type="ECO:0000255" key="1">
    <source>
        <dbReference type="HAMAP-Rule" id="MF_00248"/>
    </source>
</evidence>
<protein>
    <recommendedName>
        <fullName evidence="1">ATP-dependent protease subunit HslV</fullName>
        <ecNumber evidence="1">3.4.25.2</ecNumber>
    </recommendedName>
</protein>
<dbReference type="EC" id="3.4.25.2" evidence="1"/>
<dbReference type="EMBL" id="AP009389">
    <property type="protein sequence ID" value="BAF59430.1"/>
    <property type="molecule type" value="Genomic_DNA"/>
</dbReference>
<dbReference type="SMR" id="A5D2W7"/>
<dbReference type="STRING" id="370438.PTH_1249"/>
<dbReference type="MEROPS" id="T01.007"/>
<dbReference type="KEGG" id="pth:PTH_1249"/>
<dbReference type="eggNOG" id="COG5405">
    <property type="taxonomic scope" value="Bacteria"/>
</dbReference>
<dbReference type="HOGENOM" id="CLU_093872_1_0_9"/>
<dbReference type="Proteomes" id="UP000006556">
    <property type="component" value="Chromosome"/>
</dbReference>
<dbReference type="GO" id="GO:0009376">
    <property type="term" value="C:HslUV protease complex"/>
    <property type="evidence" value="ECO:0007669"/>
    <property type="project" value="UniProtKB-UniRule"/>
</dbReference>
<dbReference type="GO" id="GO:0005839">
    <property type="term" value="C:proteasome core complex"/>
    <property type="evidence" value="ECO:0007669"/>
    <property type="project" value="InterPro"/>
</dbReference>
<dbReference type="GO" id="GO:0046872">
    <property type="term" value="F:metal ion binding"/>
    <property type="evidence" value="ECO:0007669"/>
    <property type="project" value="UniProtKB-KW"/>
</dbReference>
<dbReference type="GO" id="GO:0004298">
    <property type="term" value="F:threonine-type endopeptidase activity"/>
    <property type="evidence" value="ECO:0007669"/>
    <property type="project" value="UniProtKB-KW"/>
</dbReference>
<dbReference type="GO" id="GO:0051603">
    <property type="term" value="P:proteolysis involved in protein catabolic process"/>
    <property type="evidence" value="ECO:0007669"/>
    <property type="project" value="InterPro"/>
</dbReference>
<dbReference type="CDD" id="cd01913">
    <property type="entry name" value="protease_HslV"/>
    <property type="match status" value="1"/>
</dbReference>
<dbReference type="FunFam" id="3.60.20.10:FF:000002">
    <property type="entry name" value="ATP-dependent protease subunit HslV"/>
    <property type="match status" value="1"/>
</dbReference>
<dbReference type="Gene3D" id="3.60.20.10">
    <property type="entry name" value="Glutamine Phosphoribosylpyrophosphate, subunit 1, domain 1"/>
    <property type="match status" value="1"/>
</dbReference>
<dbReference type="HAMAP" id="MF_00248">
    <property type="entry name" value="HslV"/>
    <property type="match status" value="1"/>
</dbReference>
<dbReference type="InterPro" id="IPR022281">
    <property type="entry name" value="ATP-dep_Prtase_HsIV_su"/>
</dbReference>
<dbReference type="InterPro" id="IPR029055">
    <property type="entry name" value="Ntn_hydrolases_N"/>
</dbReference>
<dbReference type="InterPro" id="IPR001353">
    <property type="entry name" value="Proteasome_sua/b"/>
</dbReference>
<dbReference type="InterPro" id="IPR023333">
    <property type="entry name" value="Proteasome_suB-type"/>
</dbReference>
<dbReference type="NCBIfam" id="TIGR03692">
    <property type="entry name" value="ATP_dep_HslV"/>
    <property type="match status" value="1"/>
</dbReference>
<dbReference type="NCBIfam" id="NF003964">
    <property type="entry name" value="PRK05456.1"/>
    <property type="match status" value="1"/>
</dbReference>
<dbReference type="PANTHER" id="PTHR32194:SF0">
    <property type="entry name" value="ATP-DEPENDENT PROTEASE SUBUNIT HSLV"/>
    <property type="match status" value="1"/>
</dbReference>
<dbReference type="PANTHER" id="PTHR32194">
    <property type="entry name" value="METALLOPROTEASE TLDD"/>
    <property type="match status" value="1"/>
</dbReference>
<dbReference type="Pfam" id="PF00227">
    <property type="entry name" value="Proteasome"/>
    <property type="match status" value="1"/>
</dbReference>
<dbReference type="PIRSF" id="PIRSF039093">
    <property type="entry name" value="HslV"/>
    <property type="match status" value="1"/>
</dbReference>
<dbReference type="SUPFAM" id="SSF56235">
    <property type="entry name" value="N-terminal nucleophile aminohydrolases (Ntn hydrolases)"/>
    <property type="match status" value="1"/>
</dbReference>
<dbReference type="PROSITE" id="PS51476">
    <property type="entry name" value="PROTEASOME_BETA_2"/>
    <property type="match status" value="1"/>
</dbReference>
<keyword id="KW-0021">Allosteric enzyme</keyword>
<keyword id="KW-0963">Cytoplasm</keyword>
<keyword id="KW-0378">Hydrolase</keyword>
<keyword id="KW-0479">Metal-binding</keyword>
<keyword id="KW-0645">Protease</keyword>
<keyword id="KW-1185">Reference proteome</keyword>
<keyword id="KW-0915">Sodium</keyword>
<keyword id="KW-0888">Threonine protease</keyword>
<sequence>MFHATTIVAVRKGGKVAVAGDGQVTFGQNTIIKKGARKIRRLYKDSVLAGFAGSVADAITLFEKFEGKLEEYHGNLQRAAVELAKDWRTDRILRRLEALLIVADKENLLIISGSGEVIEPDDGVAAIGSGGPYALAAARALVRHTSMEAEDIAREALAVAAEICVYTNDNIIVERL</sequence>
<proteinExistence type="inferred from homology"/>
<name>HSLV_PELTS</name>
<reference key="1">
    <citation type="journal article" date="2008" name="Genome Res.">
        <title>The genome of Pelotomaculum thermopropionicum reveals niche-associated evolution in anaerobic microbiota.</title>
        <authorList>
            <person name="Kosaka T."/>
            <person name="Kato S."/>
            <person name="Shimoyama T."/>
            <person name="Ishii S."/>
            <person name="Abe T."/>
            <person name="Watanabe K."/>
        </authorList>
    </citation>
    <scope>NUCLEOTIDE SEQUENCE [LARGE SCALE GENOMIC DNA]</scope>
    <source>
        <strain>DSM 13744 / JCM 10971 / SI</strain>
    </source>
</reference>
<feature type="chain" id="PRO_0000336785" description="ATP-dependent protease subunit HslV">
    <location>
        <begin position="1"/>
        <end position="176"/>
    </location>
</feature>
<feature type="active site" evidence="1">
    <location>
        <position position="5"/>
    </location>
</feature>
<feature type="binding site" evidence="1">
    <location>
        <position position="161"/>
    </location>
    <ligand>
        <name>Na(+)</name>
        <dbReference type="ChEBI" id="CHEBI:29101"/>
    </ligand>
</feature>
<feature type="binding site" evidence="1">
    <location>
        <position position="164"/>
    </location>
    <ligand>
        <name>Na(+)</name>
        <dbReference type="ChEBI" id="CHEBI:29101"/>
    </ligand>
</feature>
<feature type="binding site" evidence="1">
    <location>
        <position position="167"/>
    </location>
    <ligand>
        <name>Na(+)</name>
        <dbReference type="ChEBI" id="CHEBI:29101"/>
    </ligand>
</feature>
<organism>
    <name type="scientific">Pelotomaculum thermopropionicum (strain DSM 13744 / JCM 10971 / SI)</name>
    <dbReference type="NCBI Taxonomy" id="370438"/>
    <lineage>
        <taxon>Bacteria</taxon>
        <taxon>Bacillati</taxon>
        <taxon>Bacillota</taxon>
        <taxon>Clostridia</taxon>
        <taxon>Eubacteriales</taxon>
        <taxon>Desulfotomaculaceae</taxon>
        <taxon>Pelotomaculum</taxon>
    </lineage>
</organism>
<gene>
    <name evidence="1" type="primary">hslV</name>
    <name type="ordered locus">PTH_1249</name>
</gene>
<comment type="function">
    <text evidence="1">Protease subunit of a proteasome-like degradation complex believed to be a general protein degrading machinery.</text>
</comment>
<comment type="catalytic activity">
    <reaction evidence="1">
        <text>ATP-dependent cleavage of peptide bonds with broad specificity.</text>
        <dbReference type="EC" id="3.4.25.2"/>
    </reaction>
</comment>
<comment type="activity regulation">
    <text evidence="1">Allosterically activated by HslU binding.</text>
</comment>
<comment type="subunit">
    <text evidence="1">A double ring-shaped homohexamer of HslV is capped on each side by a ring-shaped HslU homohexamer. The assembly of the HslU/HslV complex is dependent on binding of ATP.</text>
</comment>
<comment type="subcellular location">
    <subcellularLocation>
        <location evidence="1">Cytoplasm</location>
    </subcellularLocation>
</comment>
<comment type="similarity">
    <text evidence="1">Belongs to the peptidase T1B family. HslV subfamily.</text>
</comment>